<keyword id="KW-0520">NAD</keyword>
<keyword id="KW-0560">Oxidoreductase</keyword>
<keyword id="KW-1185">Reference proteome</keyword>
<keyword id="KW-0816">Tricarboxylic acid cycle</keyword>
<sequence>MADPIRVAVTGAAGQIAYSLLVRLASGQLFGKDRKVELKLLEIPQAMGPLEGVMMELQDCAFPTLAKVEAFDNPEQAFDGINWCLMVGSRPRGPGMERSDLIKINGPIFVNQGKALNRAAQDVRAVVVGNPCNTNCMIAAHNSDVPHERFSAMMRLDQNRAKYLLASKAGAQVIDVTNVVIWGNHSNNQVPDFEFAKIGGKPVPEVIADAAWLENAFMPTVQNRGAAVIKARGASSAASAANAALDHVRSLITPTPAGDTFCAAVMANGAYGVDAGLIAGMPLTSTGHGDWSIVEGVPMSPFIKGKFDAVLDELRREREMVKDLLPG</sequence>
<dbReference type="EC" id="1.1.1.37" evidence="1"/>
<dbReference type="EMBL" id="CP000471">
    <property type="protein sequence ID" value="ABK43332.1"/>
    <property type="molecule type" value="Genomic_DNA"/>
</dbReference>
<dbReference type="RefSeq" id="WP_011712492.1">
    <property type="nucleotide sequence ID" value="NC_008576.1"/>
</dbReference>
<dbReference type="SMR" id="A0L5T9"/>
<dbReference type="STRING" id="156889.Mmc1_0813"/>
<dbReference type="KEGG" id="mgm:Mmc1_0813"/>
<dbReference type="eggNOG" id="COG0039">
    <property type="taxonomic scope" value="Bacteria"/>
</dbReference>
<dbReference type="HOGENOM" id="CLU_040727_2_0_5"/>
<dbReference type="OrthoDB" id="9802969at2"/>
<dbReference type="Proteomes" id="UP000002586">
    <property type="component" value="Chromosome"/>
</dbReference>
<dbReference type="GO" id="GO:0030060">
    <property type="term" value="F:L-malate dehydrogenase (NAD+) activity"/>
    <property type="evidence" value="ECO:0007669"/>
    <property type="project" value="UniProtKB-UniRule"/>
</dbReference>
<dbReference type="GO" id="GO:0006108">
    <property type="term" value="P:malate metabolic process"/>
    <property type="evidence" value="ECO:0007669"/>
    <property type="project" value="InterPro"/>
</dbReference>
<dbReference type="GO" id="GO:0006099">
    <property type="term" value="P:tricarboxylic acid cycle"/>
    <property type="evidence" value="ECO:0007669"/>
    <property type="project" value="UniProtKB-UniRule"/>
</dbReference>
<dbReference type="CDD" id="cd01338">
    <property type="entry name" value="MDH_chloroplast-like"/>
    <property type="match status" value="1"/>
</dbReference>
<dbReference type="FunFam" id="3.40.50.720:FF:000010">
    <property type="entry name" value="Malate dehydrogenase"/>
    <property type="match status" value="1"/>
</dbReference>
<dbReference type="FunFam" id="3.90.110.10:FF:000002">
    <property type="entry name" value="Malate dehydrogenase"/>
    <property type="match status" value="1"/>
</dbReference>
<dbReference type="Gene3D" id="3.90.110.10">
    <property type="entry name" value="Lactate dehydrogenase/glycoside hydrolase, family 4, C-terminal"/>
    <property type="match status" value="1"/>
</dbReference>
<dbReference type="Gene3D" id="3.40.50.720">
    <property type="entry name" value="NAD(P)-binding Rossmann-like Domain"/>
    <property type="match status" value="1"/>
</dbReference>
<dbReference type="HAMAP" id="MF_01517">
    <property type="entry name" value="Malate_dehydrog_2"/>
    <property type="match status" value="1"/>
</dbReference>
<dbReference type="InterPro" id="IPR001557">
    <property type="entry name" value="L-lactate/malate_DH"/>
</dbReference>
<dbReference type="InterPro" id="IPR022383">
    <property type="entry name" value="Lactate/malate_DH_C"/>
</dbReference>
<dbReference type="InterPro" id="IPR001236">
    <property type="entry name" value="Lactate/malate_DH_N"/>
</dbReference>
<dbReference type="InterPro" id="IPR015955">
    <property type="entry name" value="Lactate_DH/Glyco_Ohase_4_C"/>
</dbReference>
<dbReference type="InterPro" id="IPR010945">
    <property type="entry name" value="Malate_DH_type2"/>
</dbReference>
<dbReference type="InterPro" id="IPR036291">
    <property type="entry name" value="NAD(P)-bd_dom_sf"/>
</dbReference>
<dbReference type="NCBIfam" id="TIGR01759">
    <property type="entry name" value="MalateDH-SF1"/>
    <property type="match status" value="1"/>
</dbReference>
<dbReference type="NCBIfam" id="NF003916">
    <property type="entry name" value="PRK05442.1"/>
    <property type="match status" value="1"/>
</dbReference>
<dbReference type="PANTHER" id="PTHR23382">
    <property type="entry name" value="MALATE DEHYDROGENASE"/>
    <property type="match status" value="1"/>
</dbReference>
<dbReference type="Pfam" id="PF02866">
    <property type="entry name" value="Ldh_1_C"/>
    <property type="match status" value="1"/>
</dbReference>
<dbReference type="Pfam" id="PF00056">
    <property type="entry name" value="Ldh_1_N"/>
    <property type="match status" value="1"/>
</dbReference>
<dbReference type="PIRSF" id="PIRSF000102">
    <property type="entry name" value="Lac_mal_DH"/>
    <property type="match status" value="1"/>
</dbReference>
<dbReference type="SUPFAM" id="SSF56327">
    <property type="entry name" value="LDH C-terminal domain-like"/>
    <property type="match status" value="1"/>
</dbReference>
<dbReference type="SUPFAM" id="SSF51735">
    <property type="entry name" value="NAD(P)-binding Rossmann-fold domains"/>
    <property type="match status" value="1"/>
</dbReference>
<evidence type="ECO:0000255" key="1">
    <source>
        <dbReference type="HAMAP-Rule" id="MF_01517"/>
    </source>
</evidence>
<gene>
    <name evidence="1" type="primary">mdh</name>
    <name type="ordered locus">Mmc1_0813</name>
</gene>
<organism>
    <name type="scientific">Magnetococcus marinus (strain ATCC BAA-1437 / JCM 17883 / MC-1)</name>
    <dbReference type="NCBI Taxonomy" id="156889"/>
    <lineage>
        <taxon>Bacteria</taxon>
        <taxon>Pseudomonadati</taxon>
        <taxon>Pseudomonadota</taxon>
        <taxon>Alphaproteobacteria</taxon>
        <taxon>Magnetococcales</taxon>
        <taxon>Magnetococcaceae</taxon>
        <taxon>Magnetococcus</taxon>
    </lineage>
</organism>
<name>MDH_MAGMM</name>
<comment type="function">
    <text evidence="1">Catalyzes the reversible oxidation of malate to oxaloacetate.</text>
</comment>
<comment type="catalytic activity">
    <reaction evidence="1">
        <text>(S)-malate + NAD(+) = oxaloacetate + NADH + H(+)</text>
        <dbReference type="Rhea" id="RHEA:21432"/>
        <dbReference type="ChEBI" id="CHEBI:15378"/>
        <dbReference type="ChEBI" id="CHEBI:15589"/>
        <dbReference type="ChEBI" id="CHEBI:16452"/>
        <dbReference type="ChEBI" id="CHEBI:57540"/>
        <dbReference type="ChEBI" id="CHEBI:57945"/>
        <dbReference type="EC" id="1.1.1.37"/>
    </reaction>
</comment>
<comment type="similarity">
    <text evidence="1">Belongs to the LDH/MDH superfamily. MDH type 2 family.</text>
</comment>
<proteinExistence type="inferred from homology"/>
<protein>
    <recommendedName>
        <fullName evidence="1">Malate dehydrogenase</fullName>
        <ecNumber evidence="1">1.1.1.37</ecNumber>
    </recommendedName>
</protein>
<feature type="chain" id="PRO_0000294390" description="Malate dehydrogenase">
    <location>
        <begin position="1"/>
        <end position="327"/>
    </location>
</feature>
<feature type="active site" description="Proton acceptor" evidence="1">
    <location>
        <position position="185"/>
    </location>
</feature>
<feature type="binding site" evidence="1">
    <location>
        <begin position="11"/>
        <end position="17"/>
    </location>
    <ligand>
        <name>NAD(+)</name>
        <dbReference type="ChEBI" id="CHEBI:57540"/>
    </ligand>
</feature>
<feature type="binding site" evidence="1">
    <location>
        <position position="92"/>
    </location>
    <ligand>
        <name>substrate</name>
    </ligand>
</feature>
<feature type="binding site" evidence="1">
    <location>
        <position position="98"/>
    </location>
    <ligand>
        <name>substrate</name>
    </ligand>
</feature>
<feature type="binding site" evidence="1">
    <location>
        <position position="105"/>
    </location>
    <ligand>
        <name>NAD(+)</name>
        <dbReference type="ChEBI" id="CHEBI:57540"/>
    </ligand>
</feature>
<feature type="binding site" evidence="1">
    <location>
        <position position="112"/>
    </location>
    <ligand>
        <name>NAD(+)</name>
        <dbReference type="ChEBI" id="CHEBI:57540"/>
    </ligand>
</feature>
<feature type="binding site" evidence="1">
    <location>
        <begin position="128"/>
        <end position="130"/>
    </location>
    <ligand>
        <name>NAD(+)</name>
        <dbReference type="ChEBI" id="CHEBI:57540"/>
    </ligand>
</feature>
<feature type="binding site" evidence="1">
    <location>
        <position position="130"/>
    </location>
    <ligand>
        <name>substrate</name>
    </ligand>
</feature>
<feature type="binding site" evidence="1">
    <location>
        <position position="160"/>
    </location>
    <ligand>
        <name>substrate</name>
    </ligand>
</feature>
<accession>A0L5T9</accession>
<reference key="1">
    <citation type="journal article" date="2009" name="Appl. Environ. Microbiol.">
        <title>Complete genome sequence of the chemolithoautotrophic marine magnetotactic coccus strain MC-1.</title>
        <authorList>
            <person name="Schubbe S."/>
            <person name="Williams T.J."/>
            <person name="Xie G."/>
            <person name="Kiss H.E."/>
            <person name="Brettin T.S."/>
            <person name="Martinez D."/>
            <person name="Ross C.A."/>
            <person name="Schuler D."/>
            <person name="Cox B.L."/>
            <person name="Nealson K.H."/>
            <person name="Bazylinski D.A."/>
        </authorList>
    </citation>
    <scope>NUCLEOTIDE SEQUENCE [LARGE SCALE GENOMIC DNA]</scope>
    <source>
        <strain>ATCC BAA-1437 / JCM 17883 / MC-1</strain>
    </source>
</reference>